<gene>
    <name type="primary">mamI</name>
    <name type="ordered locus">amb0962</name>
</gene>
<sequence>MPSVIFGLLALALGLLGVTAWWWSVTEFLRGAVPVALLILGLVALASGVQSVRLPRSNKGTASDPDIDG</sequence>
<protein>
    <recommendedName>
        <fullName evidence="9">Magnetosome protein MamI</fullName>
    </recommendedName>
</protein>
<proteinExistence type="evidence at protein level"/>
<dbReference type="EMBL" id="AP007255">
    <property type="protein sequence ID" value="BAE49766.1"/>
    <property type="molecule type" value="Genomic_DNA"/>
</dbReference>
<dbReference type="RefSeq" id="WP_008620768.1">
    <property type="nucleotide sequence ID" value="NC_007626.1"/>
</dbReference>
<dbReference type="SMR" id="Q2W8Q9"/>
<dbReference type="STRING" id="342108.amb0962"/>
<dbReference type="KEGG" id="mag:amb0962"/>
<dbReference type="HOGENOM" id="CLU_2788987_0_0_5"/>
<dbReference type="Proteomes" id="UP000007058">
    <property type="component" value="Chromosome"/>
</dbReference>
<dbReference type="GO" id="GO:0110146">
    <property type="term" value="C:magnetosome membrane"/>
    <property type="evidence" value="ECO:0000314"/>
    <property type="project" value="UniProtKB"/>
</dbReference>
<dbReference type="GO" id="GO:0046872">
    <property type="term" value="F:metal ion binding"/>
    <property type="evidence" value="ECO:0007669"/>
    <property type="project" value="UniProtKB-KW"/>
</dbReference>
<dbReference type="NCBIfam" id="NF040963">
    <property type="entry name" value="MamI"/>
    <property type="match status" value="1"/>
</dbReference>
<name>MAMI_PARM1</name>
<reference key="1">
    <citation type="journal article" date="2005" name="DNA Res.">
        <title>Complete genome sequence of the facultative anaerobic magnetotactic bacterium Magnetospirillum sp. strain AMB-1.</title>
        <authorList>
            <person name="Matsunaga T."/>
            <person name="Okamura Y."/>
            <person name="Fukuda Y."/>
            <person name="Wahyudi A.T."/>
            <person name="Murase Y."/>
            <person name="Takeyama H."/>
        </authorList>
    </citation>
    <scope>NUCLEOTIDE SEQUENCE [LARGE SCALE GENOMIC DNA]</scope>
    <source>
        <strain>ATCC 700264 / AMB-1</strain>
    </source>
</reference>
<reference key="2">
    <citation type="journal article" date="2010" name="Proc. Natl. Acad. Sci. U.S.A.">
        <title>Comprehensive genetic dissection of the magnetosome gene island reveals the step-wise assembly of a prokaryotic organelle.</title>
        <authorList>
            <person name="Murat D."/>
            <person name="Quinlan A."/>
            <person name="Vali H."/>
            <person name="Komeili A."/>
        </authorList>
    </citation>
    <scope>FUNCTION</scope>
    <scope>SUBCELLULAR LOCATION</scope>
    <scope>PROBABLE OPERON</scope>
    <scope>DISRUPTION PHENOTYPE</scope>
    <source>
        <strain>ATCC 700264 / AMB-1</strain>
    </source>
</reference>
<reference key="3">
    <citation type="journal article" date="2011" name="Mol. Microbiol.">
        <title>MamK, a bacterial actin, forms dynamic filaments in vivo that are regulated by the acidic proteins MamJ and LimJ.</title>
        <authorList>
            <person name="Draper O."/>
            <person name="Byrne M.E."/>
            <person name="Li Z."/>
            <person name="Keyhani S."/>
            <person name="Barrozo J.C."/>
            <person name="Jensen G."/>
            <person name="Komeili A."/>
        </authorList>
    </citation>
    <scope>SUBCELLULAR LOCATION</scope>
    <source>
        <strain>ATCC 700264 / AMB-1</strain>
    </source>
</reference>
<reference key="4">
    <citation type="journal article" date="2011" name="Mol. Microbiol.">
        <title>The HtrA/DegP family protease MamE is a bifunctional protein with roles in magnetosome protein localization and magnetite biomineralization.</title>
        <authorList>
            <person name="Quinlan A."/>
            <person name="Murat D."/>
            <person name="Vali H."/>
            <person name="Komeili A."/>
        </authorList>
    </citation>
    <scope>SUBCELLULAR LOCATION</scope>
    <source>
        <strain>ATCC 700264 / AMB-1</strain>
    </source>
</reference>
<reference key="5">
    <citation type="journal article" date="2012" name="Mol. Microbiol.">
        <title>The magnetosome membrane protein, MmsF, is a major regulator of magnetite biomineralization in Magnetospirillum magneticum AMB-1.</title>
        <authorList>
            <person name="Murat D."/>
            <person name="Falahati V."/>
            <person name="Bertinetti L."/>
            <person name="Csencsits R."/>
            <person name="Koernig A."/>
            <person name="Downing K."/>
            <person name="Faivre D."/>
            <person name="Komeili A."/>
        </authorList>
    </citation>
    <scope>MINIMAL MAGNETOSOME ISLAND</scope>
    <source>
        <strain>ATCC 700264 / AMB-1</strain>
    </source>
</reference>
<reference key="6">
    <citation type="journal article" date="2016" name="ChemBioChem">
        <title>Magnetite-binding flagellar filaments displaying the MamI loop motif.</title>
        <authorList>
            <person name="Bereczk-Tompa E."/>
            <person name="Posfai M."/>
            <person name="Toth B."/>
            <person name="Vonderviszt F."/>
        </authorList>
    </citation>
    <scope>DOMAIN</scope>
    <scope>BIOTECHNOLOGY</scope>
    <scope>MAGNETITE-BINDING</scope>
</reference>
<reference key="7">
    <citation type="journal article" date="2017" name="MBio">
        <title>Tethered Magnets Are the Key to Magnetotaxis: Direct Observations of Magnetospirillum magneticum AMB-1 Show that MamK Distributes Magnetosome Organelles Equally to Daughter Cells.</title>
        <authorList>
            <person name="Taoka A."/>
            <person name="Kiyokawa A."/>
            <person name="Uesugi C."/>
            <person name="Kikuchi Y."/>
            <person name="Oestreicher Z."/>
            <person name="Morii K."/>
            <person name="Eguchi Y."/>
            <person name="Fukumori Y."/>
        </authorList>
    </citation>
    <scope>SUBCELLULAR LOCATION</scope>
    <source>
        <strain>ATCC 700264 / AMB-1</strain>
    </source>
</reference>
<feature type="chain" id="PRO_0000447802" description="Magnetosome protein MamI">
    <location>
        <begin position="1"/>
        <end position="69"/>
    </location>
</feature>
<feature type="topological domain" description="Cytoplasmic" evidence="9">
    <location>
        <begin position="1"/>
        <end position="2"/>
    </location>
</feature>
<feature type="transmembrane region" description="Helical" evidence="2">
    <location>
        <begin position="3"/>
        <end position="23"/>
    </location>
</feature>
<feature type="topological domain" description="Lumenal" evidence="11">
    <location>
        <begin position="24"/>
        <end position="31"/>
    </location>
</feature>
<feature type="transmembrane region" description="Helical" evidence="2">
    <location>
        <begin position="32"/>
        <end position="52"/>
    </location>
</feature>
<feature type="topological domain" description="Cytoplasmic" evidence="9">
    <location>
        <begin position="53"/>
        <end position="69"/>
    </location>
</feature>
<evidence type="ECO:0000250" key="1">
    <source>
        <dbReference type="UniProtKB" id="Q6NE62"/>
    </source>
</evidence>
<evidence type="ECO:0000255" key="2"/>
<evidence type="ECO:0000269" key="3">
    <source>
    </source>
</evidence>
<evidence type="ECO:0000269" key="4">
    <source>
    </source>
</evidence>
<evidence type="ECO:0000269" key="5">
    <source>
    </source>
</evidence>
<evidence type="ECO:0000269" key="6">
    <source>
    </source>
</evidence>
<evidence type="ECO:0000269" key="7">
    <source>
    </source>
</evidence>
<evidence type="ECO:0000269" key="8">
    <source>
    </source>
</evidence>
<evidence type="ECO:0000305" key="9"/>
<evidence type="ECO:0000305" key="10">
    <source>
    </source>
</evidence>
<evidence type="ECO:0000305" key="11">
    <source>
    </source>
</evidence>
<comment type="function">
    <text evidence="1 3 11">Essential for magnetosome formation (PubMed:20212111). May bind magnetite (Probable). May be involved in an early stage of magnetosome nucleation (By similarity).</text>
</comment>
<comment type="subcellular location">
    <subcellularLocation>
        <location evidence="8 10">Magnetosome membrane</location>
        <topology evidence="2">Multi-pass membrane protein</topology>
    </subcellularLocation>
    <text evidence="3 4 5 8">Tagged protein forms straight lines extending along most of the cell associated with its inner curvature, in the correct position to be associated with magnetosomes (PubMed:20212111, PubMed:21414040, PubMed:21883528, PubMed:28790202). In a mamK deletion MamI forms a linear punctate pattern, suggesting it is associated with magnetosomes (PubMed:20212111). In a mamE deletion MamI forms a linear punctate pattern (PubMed:21414040). In double mamJ/limJ deletion MamI forms a linear punctate pattern (PubMed:21883528).</text>
</comment>
<comment type="induction">
    <text evidence="10">Part of the probable 18 gene mamAB operon.</text>
</comment>
<comment type="disruption phenotype">
    <text evidence="3">Cells have no magnetic response and no magnetosome membranes (PubMed:20212111). Deletion of genes mamH to mamV (amb0961 to amb0978) gives cells with no magnetosomes and no magnetic response (PubMed:20212111).</text>
</comment>
<comment type="biotechnology">
    <text evidence="7">A short loop (residues 21-31, which is probably in the magnetosome lumen) when inserted into a Salmonella flagellin protein (FliC) binds magnetite, which may be used to purify particular forms of magnetite.</text>
</comment>
<comment type="miscellaneous">
    <text evidence="9">This bacteria makes up to 20 cubo-octahedral magnetosomes of about 45 nm in diameter which contain membrane-bound crystals of magnetite (Fe(3)O(4)).</text>
</comment>
<comment type="miscellaneous">
    <text evidence="6">Expression of just the minimal mamAB gene cluster (amb0961 to amb0978), including this gene, is sufficient to form a minimal magnetosome chain with small magnetite particles.</text>
</comment>
<comment type="similarity">
    <text evidence="9">Belongs to the magnetosome MamI protein family.</text>
</comment>
<organism>
    <name type="scientific">Paramagnetospirillum magneticum (strain ATCC 700264 / AMB-1)</name>
    <name type="common">Magnetospirillum magneticum</name>
    <dbReference type="NCBI Taxonomy" id="342108"/>
    <lineage>
        <taxon>Bacteria</taxon>
        <taxon>Pseudomonadati</taxon>
        <taxon>Pseudomonadota</taxon>
        <taxon>Alphaproteobacteria</taxon>
        <taxon>Rhodospirillales</taxon>
        <taxon>Magnetospirillaceae</taxon>
        <taxon>Paramagnetospirillum</taxon>
    </lineage>
</organism>
<keyword id="KW-0091">Biomineralization</keyword>
<keyword id="KW-0408">Iron</keyword>
<keyword id="KW-1281">Magnetosome</keyword>
<keyword id="KW-0472">Membrane</keyword>
<keyword id="KW-0479">Metal-binding</keyword>
<keyword id="KW-0812">Transmembrane</keyword>
<keyword id="KW-1133">Transmembrane helix</keyword>
<accession>Q2W8Q9</accession>